<gene>
    <name evidence="1" type="primary">rplN</name>
    <name type="ordered locus">str1924</name>
</gene>
<organism>
    <name type="scientific">Streptococcus thermophilus (strain CNRZ 1066)</name>
    <dbReference type="NCBI Taxonomy" id="299768"/>
    <lineage>
        <taxon>Bacteria</taxon>
        <taxon>Bacillati</taxon>
        <taxon>Bacillota</taxon>
        <taxon>Bacilli</taxon>
        <taxon>Lactobacillales</taxon>
        <taxon>Streptococcaceae</taxon>
        <taxon>Streptococcus</taxon>
    </lineage>
</organism>
<keyword id="KW-0687">Ribonucleoprotein</keyword>
<keyword id="KW-0689">Ribosomal protein</keyword>
<keyword id="KW-0694">RNA-binding</keyword>
<keyword id="KW-0699">rRNA-binding</keyword>
<name>RL14_STRT1</name>
<proteinExistence type="inferred from homology"/>
<dbReference type="EMBL" id="CP000024">
    <property type="protein sequence ID" value="AAV63437.1"/>
    <property type="molecule type" value="Genomic_DNA"/>
</dbReference>
<dbReference type="RefSeq" id="WP_002952155.1">
    <property type="nucleotide sequence ID" value="NC_006449.1"/>
</dbReference>
<dbReference type="SMR" id="Q5LXS1"/>
<dbReference type="GeneID" id="66899652"/>
<dbReference type="KEGG" id="stc:str1924"/>
<dbReference type="HOGENOM" id="CLU_095071_2_1_9"/>
<dbReference type="GO" id="GO:0022625">
    <property type="term" value="C:cytosolic large ribosomal subunit"/>
    <property type="evidence" value="ECO:0007669"/>
    <property type="project" value="TreeGrafter"/>
</dbReference>
<dbReference type="GO" id="GO:0070180">
    <property type="term" value="F:large ribosomal subunit rRNA binding"/>
    <property type="evidence" value="ECO:0007669"/>
    <property type="project" value="TreeGrafter"/>
</dbReference>
<dbReference type="GO" id="GO:0003735">
    <property type="term" value="F:structural constituent of ribosome"/>
    <property type="evidence" value="ECO:0007669"/>
    <property type="project" value="InterPro"/>
</dbReference>
<dbReference type="GO" id="GO:0006412">
    <property type="term" value="P:translation"/>
    <property type="evidence" value="ECO:0007669"/>
    <property type="project" value="UniProtKB-UniRule"/>
</dbReference>
<dbReference type="CDD" id="cd00337">
    <property type="entry name" value="Ribosomal_uL14"/>
    <property type="match status" value="1"/>
</dbReference>
<dbReference type="FunFam" id="2.40.150.20:FF:000001">
    <property type="entry name" value="50S ribosomal protein L14"/>
    <property type="match status" value="1"/>
</dbReference>
<dbReference type="Gene3D" id="2.40.150.20">
    <property type="entry name" value="Ribosomal protein L14"/>
    <property type="match status" value="1"/>
</dbReference>
<dbReference type="HAMAP" id="MF_01367">
    <property type="entry name" value="Ribosomal_uL14"/>
    <property type="match status" value="1"/>
</dbReference>
<dbReference type="InterPro" id="IPR000218">
    <property type="entry name" value="Ribosomal_uL14"/>
</dbReference>
<dbReference type="InterPro" id="IPR005745">
    <property type="entry name" value="Ribosomal_uL14_bac-type"/>
</dbReference>
<dbReference type="InterPro" id="IPR019972">
    <property type="entry name" value="Ribosomal_uL14_CS"/>
</dbReference>
<dbReference type="InterPro" id="IPR036853">
    <property type="entry name" value="Ribosomal_uL14_sf"/>
</dbReference>
<dbReference type="NCBIfam" id="TIGR01067">
    <property type="entry name" value="rplN_bact"/>
    <property type="match status" value="1"/>
</dbReference>
<dbReference type="PANTHER" id="PTHR11761">
    <property type="entry name" value="50S/60S RIBOSOMAL PROTEIN L14/L23"/>
    <property type="match status" value="1"/>
</dbReference>
<dbReference type="PANTHER" id="PTHR11761:SF3">
    <property type="entry name" value="LARGE RIBOSOMAL SUBUNIT PROTEIN UL14M"/>
    <property type="match status" value="1"/>
</dbReference>
<dbReference type="Pfam" id="PF00238">
    <property type="entry name" value="Ribosomal_L14"/>
    <property type="match status" value="1"/>
</dbReference>
<dbReference type="SMART" id="SM01374">
    <property type="entry name" value="Ribosomal_L14"/>
    <property type="match status" value="1"/>
</dbReference>
<dbReference type="SUPFAM" id="SSF50193">
    <property type="entry name" value="Ribosomal protein L14"/>
    <property type="match status" value="1"/>
</dbReference>
<dbReference type="PROSITE" id="PS00049">
    <property type="entry name" value="RIBOSOMAL_L14"/>
    <property type="match status" value="1"/>
</dbReference>
<comment type="function">
    <text evidence="1">Binds to 23S rRNA. Forms part of two intersubunit bridges in the 70S ribosome.</text>
</comment>
<comment type="subunit">
    <text evidence="1">Part of the 50S ribosomal subunit. Forms a cluster with proteins L3 and L19. In the 70S ribosome, L14 and L19 interact and together make contacts with the 16S rRNA in bridges B5 and B8.</text>
</comment>
<comment type="similarity">
    <text evidence="1">Belongs to the universal ribosomal protein uL14 family.</text>
</comment>
<protein>
    <recommendedName>
        <fullName evidence="1">Large ribosomal subunit protein uL14</fullName>
    </recommendedName>
    <alternativeName>
        <fullName evidence="2">50S ribosomal protein L14</fullName>
    </alternativeName>
</protein>
<reference key="1">
    <citation type="journal article" date="2004" name="Nat. Biotechnol.">
        <title>Complete sequence and comparative genome analysis of the dairy bacterium Streptococcus thermophilus.</title>
        <authorList>
            <person name="Bolotin A."/>
            <person name="Quinquis B."/>
            <person name="Renault P."/>
            <person name="Sorokin A."/>
            <person name="Ehrlich S.D."/>
            <person name="Kulakauskas S."/>
            <person name="Lapidus A."/>
            <person name="Goltsman E."/>
            <person name="Mazur M."/>
            <person name="Pusch G.D."/>
            <person name="Fonstein M."/>
            <person name="Overbeek R."/>
            <person name="Kyprides N."/>
            <person name="Purnelle B."/>
            <person name="Prozzi D."/>
            <person name="Ngui K."/>
            <person name="Masuy D."/>
            <person name="Hancy F."/>
            <person name="Burteau S."/>
            <person name="Boutry M."/>
            <person name="Delcour J."/>
            <person name="Goffeau A."/>
            <person name="Hols P."/>
        </authorList>
    </citation>
    <scope>NUCLEOTIDE SEQUENCE [LARGE SCALE GENOMIC DNA]</scope>
    <source>
        <strain>CNRZ 1066</strain>
    </source>
</reference>
<accession>Q5LXS1</accession>
<sequence>MIQQESRLKVADNSGAREILTIKVLGGSGRKFANIGDVIVATVKQATPGGAVKKGDVVKAVIVRTKTGARRSDGSYIKFDDNAAVIIRDDKTPRGTRIFGPVARELREGGYMRIVSLAPEVL</sequence>
<feature type="chain" id="PRO_1000055728" description="Large ribosomal subunit protein uL14">
    <location>
        <begin position="1"/>
        <end position="122"/>
    </location>
</feature>
<evidence type="ECO:0000255" key="1">
    <source>
        <dbReference type="HAMAP-Rule" id="MF_01367"/>
    </source>
</evidence>
<evidence type="ECO:0000305" key="2"/>